<reference key="1">
    <citation type="journal article" date="2004" name="Proc. Natl. Acad. Sci. U.S.A.">
        <title>Genome sequence of Picrophilus torridus and its implications for life around pH 0.</title>
        <authorList>
            <person name="Fuetterer O."/>
            <person name="Angelov A."/>
            <person name="Liesegang H."/>
            <person name="Gottschalk G."/>
            <person name="Schleper C."/>
            <person name="Schepers B."/>
            <person name="Dock C."/>
            <person name="Antranikian G."/>
            <person name="Liebl W."/>
        </authorList>
    </citation>
    <scope>NUCLEOTIDE SEQUENCE [LARGE SCALE GENOMIC DNA]</scope>
    <source>
        <strain>ATCC 700027 / DSM 9790 / JCM 10055 / NBRC 100828 / KAW 2/3</strain>
    </source>
</reference>
<keyword id="KW-0210">Decarboxylase</keyword>
<keyword id="KW-0456">Lyase</keyword>
<keyword id="KW-0670">Pyruvate</keyword>
<protein>
    <recommendedName>
        <fullName evidence="1">Pyruvoyl-dependent arginine decarboxylase</fullName>
        <shortName evidence="1">PvlArgDC</shortName>
        <ecNumber evidence="1">4.1.1.19</ecNumber>
    </recommendedName>
    <component>
        <recommendedName>
            <fullName evidence="1">Pyruvoyl-dependent arginine decarboxylase subunit beta</fullName>
        </recommendedName>
    </component>
    <component>
        <recommendedName>
            <fullName evidence="1">Pyruvoyl-dependent arginine decarboxylase subunit alpha</fullName>
        </recommendedName>
    </component>
</protein>
<organism>
    <name type="scientific">Picrophilus torridus (strain ATCC 700027 / DSM 9790 / JCM 10055 / NBRC 100828 / KAW 2/3)</name>
    <dbReference type="NCBI Taxonomy" id="1122961"/>
    <lineage>
        <taxon>Archaea</taxon>
        <taxon>Methanobacteriati</taxon>
        <taxon>Thermoplasmatota</taxon>
        <taxon>Thermoplasmata</taxon>
        <taxon>Thermoplasmatales</taxon>
        <taxon>Picrophilaceae</taxon>
        <taxon>Picrophilus</taxon>
    </lineage>
</organism>
<comment type="catalytic activity">
    <reaction evidence="1">
        <text>L-arginine + H(+) = agmatine + CO2</text>
        <dbReference type="Rhea" id="RHEA:17641"/>
        <dbReference type="ChEBI" id="CHEBI:15378"/>
        <dbReference type="ChEBI" id="CHEBI:16526"/>
        <dbReference type="ChEBI" id="CHEBI:32682"/>
        <dbReference type="ChEBI" id="CHEBI:58145"/>
        <dbReference type="EC" id="4.1.1.19"/>
    </reaction>
</comment>
<comment type="cofactor">
    <cofactor evidence="1">
        <name>pyruvate</name>
        <dbReference type="ChEBI" id="CHEBI:15361"/>
    </cofactor>
    <text evidence="1">Binds 1 pyruvoyl group covalently per subunit.</text>
</comment>
<comment type="similarity">
    <text evidence="1">Belongs to the PdaD family.</text>
</comment>
<sequence>MQNLLPSKVFFTRGIGRGRTELQSFENALRSAGIAQFNIVSVSSILPPRAEIISKDDGLKLLNPGQILFTVLARNSSNELNRMISSAIGYAVPSDRDHWGYLSEHHAYGETENEAGYFAEELAARMLASTMGLEEELKWDDTRKEYVLENKILTTRNIASTTVVLKKDEWTTVVAAAVLIIM</sequence>
<dbReference type="EC" id="4.1.1.19" evidence="1"/>
<dbReference type="EMBL" id="AE017261">
    <property type="protein sequence ID" value="AAT43777.1"/>
    <property type="molecule type" value="Genomic_DNA"/>
</dbReference>
<dbReference type="RefSeq" id="WP_011177993.1">
    <property type="nucleotide sequence ID" value="NC_005877.1"/>
</dbReference>
<dbReference type="SMR" id="Q6KZS5"/>
<dbReference type="STRING" id="263820.PTO1192"/>
<dbReference type="PaxDb" id="263820-PTO1192"/>
<dbReference type="GeneID" id="2844391"/>
<dbReference type="KEGG" id="pto:PTO1192"/>
<dbReference type="eggNOG" id="arCOG04490">
    <property type="taxonomic scope" value="Archaea"/>
</dbReference>
<dbReference type="HOGENOM" id="CLU_114389_0_0_2"/>
<dbReference type="InParanoid" id="Q6KZS5"/>
<dbReference type="OrthoDB" id="30748at2157"/>
<dbReference type="Proteomes" id="UP000000438">
    <property type="component" value="Chromosome"/>
</dbReference>
<dbReference type="GO" id="GO:0008792">
    <property type="term" value="F:arginine decarboxylase activity"/>
    <property type="evidence" value="ECO:0007669"/>
    <property type="project" value="UniProtKB-UniRule"/>
</dbReference>
<dbReference type="GO" id="GO:0006527">
    <property type="term" value="P:arginine catabolic process"/>
    <property type="evidence" value="ECO:0007669"/>
    <property type="project" value="InterPro"/>
</dbReference>
<dbReference type="Gene3D" id="3.50.20.10">
    <property type="entry name" value="Pyruvoyl-Dependent Histidine Decarboxylase, subunit B"/>
    <property type="match status" value="1"/>
</dbReference>
<dbReference type="HAMAP" id="MF_01404">
    <property type="entry name" value="PvlArgDC"/>
    <property type="match status" value="1"/>
</dbReference>
<dbReference type="InterPro" id="IPR016104">
    <property type="entry name" value="Pyr-dep_his/arg-deCO2ase"/>
</dbReference>
<dbReference type="InterPro" id="IPR016105">
    <property type="entry name" value="Pyr-dep_his/arg-deCO2ase_sand"/>
</dbReference>
<dbReference type="InterPro" id="IPR002724">
    <property type="entry name" value="Pyruvoyl-dep_arg_deCO2ase"/>
</dbReference>
<dbReference type="NCBIfam" id="TIGR00286">
    <property type="entry name" value="pyruvoyl-dependent arginine decarboxylase"/>
    <property type="match status" value="1"/>
</dbReference>
<dbReference type="PANTHER" id="PTHR40438">
    <property type="entry name" value="PYRUVOYL-DEPENDENT ARGININE DECARBOXYLASE"/>
    <property type="match status" value="1"/>
</dbReference>
<dbReference type="PANTHER" id="PTHR40438:SF1">
    <property type="entry name" value="PYRUVOYL-DEPENDENT ARGININE DECARBOXYLASE"/>
    <property type="match status" value="1"/>
</dbReference>
<dbReference type="Pfam" id="PF01862">
    <property type="entry name" value="PvlArgDC"/>
    <property type="match status" value="1"/>
</dbReference>
<dbReference type="PIRSF" id="PIRSF005216">
    <property type="entry name" value="Pyruvoyl-dep_arg_deCO2ase"/>
    <property type="match status" value="1"/>
</dbReference>
<dbReference type="SFLD" id="SFLDG01170">
    <property type="entry name" value="Pyruvoyl-dependent_arginine_de"/>
    <property type="match status" value="1"/>
</dbReference>
<dbReference type="SFLD" id="SFLDS00055">
    <property type="entry name" value="Pyruvoyl-Dependent_Histidine/A"/>
    <property type="match status" value="1"/>
</dbReference>
<dbReference type="SUPFAM" id="SSF56271">
    <property type="entry name" value="Pyruvoyl-dependent histidine and arginine decarboxylases"/>
    <property type="match status" value="1"/>
</dbReference>
<name>PDAD_PICTO</name>
<evidence type="ECO:0000255" key="1">
    <source>
        <dbReference type="HAMAP-Rule" id="MF_01404"/>
    </source>
</evidence>
<accession>Q6KZS5</accession>
<feature type="chain" id="PRO_0000023326" description="Pyruvoyl-dependent arginine decarboxylase subunit beta" evidence="1">
    <location>
        <begin position="1"/>
        <end position="43"/>
    </location>
</feature>
<feature type="chain" id="PRO_0000023327" description="Pyruvoyl-dependent arginine decarboxylase subunit alpha" evidence="1">
    <location>
        <begin position="44"/>
        <end position="182"/>
    </location>
</feature>
<feature type="site" description="Cleavage (non-hydrolytic)" evidence="1">
    <location>
        <begin position="43"/>
        <end position="44"/>
    </location>
</feature>
<feature type="modified residue" description="Pyruvic acid (Ser)" evidence="1">
    <location>
        <position position="44"/>
    </location>
</feature>
<gene>
    <name evidence="1" type="primary">pdaD</name>
    <name type="ordered locus">PTO1192</name>
</gene>
<proteinExistence type="inferred from homology"/>